<feature type="chain" id="PRO_1000022354" description="Bifunctional uridylyltransferase/uridylyl-removing enzyme">
    <location>
        <begin position="1"/>
        <end position="949"/>
    </location>
</feature>
<feature type="domain" description="HD" evidence="2">
    <location>
        <begin position="494"/>
        <end position="610"/>
    </location>
</feature>
<feature type="domain" description="ACT 1" evidence="1">
    <location>
        <begin position="734"/>
        <end position="815"/>
    </location>
</feature>
<feature type="domain" description="ACT 2" evidence="1">
    <location>
        <begin position="845"/>
        <end position="926"/>
    </location>
</feature>
<feature type="region of interest" description="Uridylyltransferase">
    <location>
        <begin position="1"/>
        <end position="377"/>
    </location>
</feature>
<feature type="region of interest" description="Uridylyl-removing">
    <location>
        <begin position="378"/>
        <end position="733"/>
    </location>
</feature>
<feature type="region of interest" description="Disordered" evidence="3">
    <location>
        <begin position="925"/>
        <end position="949"/>
    </location>
</feature>
<dbReference type="EC" id="2.7.7.59" evidence="1"/>
<dbReference type="EC" id="3.1.4.-" evidence="1"/>
<dbReference type="EMBL" id="CP000738">
    <property type="protein sequence ID" value="ABR58891.1"/>
    <property type="molecule type" value="Genomic_DNA"/>
</dbReference>
<dbReference type="RefSeq" id="WP_011974246.1">
    <property type="nucleotide sequence ID" value="NC_009636.1"/>
</dbReference>
<dbReference type="RefSeq" id="YP_001325726.1">
    <property type="nucleotide sequence ID" value="NC_009636.1"/>
</dbReference>
<dbReference type="SMR" id="A6U5G1"/>
<dbReference type="STRING" id="366394.Smed_0031"/>
<dbReference type="KEGG" id="smd:Smed_0031"/>
<dbReference type="PATRIC" id="fig|366394.8.peg.3085"/>
<dbReference type="eggNOG" id="COG2844">
    <property type="taxonomic scope" value="Bacteria"/>
</dbReference>
<dbReference type="HOGENOM" id="CLU_012833_1_0_5"/>
<dbReference type="OrthoDB" id="9758038at2"/>
<dbReference type="Proteomes" id="UP000001108">
    <property type="component" value="Chromosome"/>
</dbReference>
<dbReference type="GO" id="GO:0008773">
    <property type="term" value="F:[protein-PII] uridylyltransferase activity"/>
    <property type="evidence" value="ECO:0007669"/>
    <property type="project" value="UniProtKB-UniRule"/>
</dbReference>
<dbReference type="GO" id="GO:0008081">
    <property type="term" value="F:phosphoric diester hydrolase activity"/>
    <property type="evidence" value="ECO:0007669"/>
    <property type="project" value="UniProtKB-UniRule"/>
</dbReference>
<dbReference type="GO" id="GO:0009399">
    <property type="term" value="P:nitrogen fixation"/>
    <property type="evidence" value="ECO:0007669"/>
    <property type="project" value="UniProtKB-UniRule"/>
</dbReference>
<dbReference type="GO" id="GO:0006808">
    <property type="term" value="P:regulation of nitrogen utilization"/>
    <property type="evidence" value="ECO:0007669"/>
    <property type="project" value="UniProtKB-UniRule"/>
</dbReference>
<dbReference type="CDD" id="cd04899">
    <property type="entry name" value="ACT_ACR-UUR-like_2"/>
    <property type="match status" value="1"/>
</dbReference>
<dbReference type="CDD" id="cd04900">
    <property type="entry name" value="ACT_UUR-like_1"/>
    <property type="match status" value="1"/>
</dbReference>
<dbReference type="CDD" id="cd00077">
    <property type="entry name" value="HDc"/>
    <property type="match status" value="1"/>
</dbReference>
<dbReference type="CDD" id="cd05401">
    <property type="entry name" value="NT_GlnE_GlnD_like"/>
    <property type="match status" value="1"/>
</dbReference>
<dbReference type="Gene3D" id="3.30.70.260">
    <property type="match status" value="1"/>
</dbReference>
<dbReference type="Gene3D" id="3.30.460.10">
    <property type="entry name" value="Beta Polymerase, domain 2"/>
    <property type="match status" value="1"/>
</dbReference>
<dbReference type="Gene3D" id="1.10.3090.10">
    <property type="entry name" value="cca-adding enzyme, domain 2"/>
    <property type="match status" value="1"/>
</dbReference>
<dbReference type="HAMAP" id="MF_00277">
    <property type="entry name" value="PII_uridylyl_transf"/>
    <property type="match status" value="1"/>
</dbReference>
<dbReference type="InterPro" id="IPR045865">
    <property type="entry name" value="ACT-like_dom_sf"/>
</dbReference>
<dbReference type="InterPro" id="IPR002912">
    <property type="entry name" value="ACT_dom"/>
</dbReference>
<dbReference type="InterPro" id="IPR003607">
    <property type="entry name" value="HD/PDEase_dom"/>
</dbReference>
<dbReference type="InterPro" id="IPR006674">
    <property type="entry name" value="HD_domain"/>
</dbReference>
<dbReference type="InterPro" id="IPR043519">
    <property type="entry name" value="NT_sf"/>
</dbReference>
<dbReference type="InterPro" id="IPR013546">
    <property type="entry name" value="PII_UdlTrfase/GS_AdlTrfase"/>
</dbReference>
<dbReference type="InterPro" id="IPR002934">
    <property type="entry name" value="Polymerase_NTP_transf_dom"/>
</dbReference>
<dbReference type="InterPro" id="IPR010043">
    <property type="entry name" value="UTase/UR"/>
</dbReference>
<dbReference type="NCBIfam" id="NF003467">
    <property type="entry name" value="PRK05092.1"/>
    <property type="match status" value="1"/>
</dbReference>
<dbReference type="NCBIfam" id="TIGR01693">
    <property type="entry name" value="UTase_glnD"/>
    <property type="match status" value="1"/>
</dbReference>
<dbReference type="PANTHER" id="PTHR47320">
    <property type="entry name" value="BIFUNCTIONAL URIDYLYLTRANSFERASE/URIDYLYL-REMOVING ENZYME"/>
    <property type="match status" value="1"/>
</dbReference>
<dbReference type="PANTHER" id="PTHR47320:SF1">
    <property type="entry name" value="BIFUNCTIONAL URIDYLYLTRANSFERASE_URIDYLYL-REMOVING ENZYME"/>
    <property type="match status" value="1"/>
</dbReference>
<dbReference type="Pfam" id="PF01842">
    <property type="entry name" value="ACT"/>
    <property type="match status" value="1"/>
</dbReference>
<dbReference type="Pfam" id="PF08335">
    <property type="entry name" value="GlnD_UR_UTase"/>
    <property type="match status" value="1"/>
</dbReference>
<dbReference type="Pfam" id="PF01966">
    <property type="entry name" value="HD"/>
    <property type="match status" value="1"/>
</dbReference>
<dbReference type="Pfam" id="PF01909">
    <property type="entry name" value="NTP_transf_2"/>
    <property type="match status" value="1"/>
</dbReference>
<dbReference type="PIRSF" id="PIRSF006288">
    <property type="entry name" value="PII_uridyltransf"/>
    <property type="match status" value="1"/>
</dbReference>
<dbReference type="SMART" id="SM00471">
    <property type="entry name" value="HDc"/>
    <property type="match status" value="1"/>
</dbReference>
<dbReference type="SUPFAM" id="SSF55021">
    <property type="entry name" value="ACT-like"/>
    <property type="match status" value="2"/>
</dbReference>
<dbReference type="SUPFAM" id="SSF81301">
    <property type="entry name" value="Nucleotidyltransferase"/>
    <property type="match status" value="1"/>
</dbReference>
<dbReference type="SUPFAM" id="SSF81593">
    <property type="entry name" value="Nucleotidyltransferase substrate binding subunit/domain"/>
    <property type="match status" value="1"/>
</dbReference>
<dbReference type="SUPFAM" id="SSF81891">
    <property type="entry name" value="Poly A polymerase C-terminal region-like"/>
    <property type="match status" value="1"/>
</dbReference>
<dbReference type="PROSITE" id="PS51671">
    <property type="entry name" value="ACT"/>
    <property type="match status" value="2"/>
</dbReference>
<dbReference type="PROSITE" id="PS51831">
    <property type="entry name" value="HD"/>
    <property type="match status" value="1"/>
</dbReference>
<evidence type="ECO:0000255" key="1">
    <source>
        <dbReference type="HAMAP-Rule" id="MF_00277"/>
    </source>
</evidence>
<evidence type="ECO:0000255" key="2">
    <source>
        <dbReference type="PROSITE-ProRule" id="PRU01175"/>
    </source>
</evidence>
<evidence type="ECO:0000256" key="3">
    <source>
        <dbReference type="SAM" id="MobiDB-lite"/>
    </source>
</evidence>
<proteinExistence type="inferred from homology"/>
<gene>
    <name evidence="1" type="primary">glnD</name>
    <name type="ordered locus">Smed_0031</name>
</gene>
<name>GLND_SINMW</name>
<accession>A6U5G1</accession>
<reference key="1">
    <citation type="submission" date="2007-06" db="EMBL/GenBank/DDBJ databases">
        <title>Complete sequence of Sinorhizobium medicae WSM419 chromosome.</title>
        <authorList>
            <consortium name="US DOE Joint Genome Institute"/>
            <person name="Copeland A."/>
            <person name="Lucas S."/>
            <person name="Lapidus A."/>
            <person name="Barry K."/>
            <person name="Glavina del Rio T."/>
            <person name="Dalin E."/>
            <person name="Tice H."/>
            <person name="Pitluck S."/>
            <person name="Chain P."/>
            <person name="Malfatti S."/>
            <person name="Shin M."/>
            <person name="Vergez L."/>
            <person name="Schmutz J."/>
            <person name="Larimer F."/>
            <person name="Land M."/>
            <person name="Hauser L."/>
            <person name="Kyrpides N."/>
            <person name="Mikhailova N."/>
            <person name="Reeve W.G."/>
            <person name="Richardson P."/>
        </authorList>
    </citation>
    <scope>NUCLEOTIDE SEQUENCE [LARGE SCALE GENOMIC DNA]</scope>
    <source>
        <strain>WSM419</strain>
    </source>
</reference>
<comment type="function">
    <text evidence="1">Modifies, by uridylylation and deuridylylation, the PII regulatory proteins (GlnB and homologs), in response to the nitrogen status of the cell that GlnD senses through the glutamine level. Under low glutamine levels, catalyzes the conversion of the PII proteins and UTP to PII-UMP and PPi, while under higher glutamine levels, GlnD hydrolyzes PII-UMP to PII and UMP (deuridylylation). Thus, controls uridylylation state and activity of the PII proteins, and plays an important role in the regulation of nitrogen fixation and metabolism.</text>
</comment>
<comment type="catalytic activity">
    <reaction evidence="1">
        <text>[protein-PII]-L-tyrosine + UTP = [protein-PII]-uridylyl-L-tyrosine + diphosphate</text>
        <dbReference type="Rhea" id="RHEA:13673"/>
        <dbReference type="Rhea" id="RHEA-COMP:12147"/>
        <dbReference type="Rhea" id="RHEA-COMP:12148"/>
        <dbReference type="ChEBI" id="CHEBI:33019"/>
        <dbReference type="ChEBI" id="CHEBI:46398"/>
        <dbReference type="ChEBI" id="CHEBI:46858"/>
        <dbReference type="ChEBI" id="CHEBI:90602"/>
        <dbReference type="EC" id="2.7.7.59"/>
    </reaction>
</comment>
<comment type="catalytic activity">
    <reaction evidence="1">
        <text>[protein-PII]-uridylyl-L-tyrosine + H2O = [protein-PII]-L-tyrosine + UMP + H(+)</text>
        <dbReference type="Rhea" id="RHEA:48600"/>
        <dbReference type="Rhea" id="RHEA-COMP:12147"/>
        <dbReference type="Rhea" id="RHEA-COMP:12148"/>
        <dbReference type="ChEBI" id="CHEBI:15377"/>
        <dbReference type="ChEBI" id="CHEBI:15378"/>
        <dbReference type="ChEBI" id="CHEBI:46858"/>
        <dbReference type="ChEBI" id="CHEBI:57865"/>
        <dbReference type="ChEBI" id="CHEBI:90602"/>
    </reaction>
</comment>
<comment type="cofactor">
    <cofactor evidence="1">
        <name>Mg(2+)</name>
        <dbReference type="ChEBI" id="CHEBI:18420"/>
    </cofactor>
</comment>
<comment type="activity regulation">
    <text evidence="1">Uridylyltransferase (UTase) activity is inhibited by glutamine, while glutamine activates uridylyl-removing (UR) activity.</text>
</comment>
<comment type="domain">
    <text evidence="1">Has four distinct domains: an N-terminal nucleotidyltransferase (NT) domain responsible for UTase activity, a central HD domain that encodes UR activity, and two C-terminal ACT domains that seem to have a role in glutamine sensing.</text>
</comment>
<comment type="similarity">
    <text evidence="1">Belongs to the GlnD family.</text>
</comment>
<sequence length="949" mass="106228">MARHETSFPEILDVAALRARCDFIASAHAEQREPMRRALLAAFKEANIAGRAKARELLAADGAGIKCAERISWLQDQLITLLHDFVLNQVFDAAKAPETSRIAVTAVGGYGRGTLAPGSDIDLLFLLPAKKAVWAEPAIEFMLYILWDLGFKVGHATRTIEDCIRLSRADMTIRTAILECRYVCGSVALASELETRFDHEIVRNTGPEFIAAKLAERDERHRKAGDTRYLVEPNVKEGKGGLRDLHTLFWISKYFYRVKDSADLVKLGVLSRQEYKLFQKAEDFLWAVRCHMHFLTGKAEERLSFDIQREIAEALGYHDHPGLSAVERFMKHYFLVAKDVGDLTRIFCSALEDQQAKDAPGISGVISRFRNRVRKIPGTLDFVDDGGRIALASPDVFKRDPVNLLRMFHIADINGLEFHPAALKQVTRSLSLITPHLRENEEANRLFLSILTSRRNPELILRRMNEAAVLGRFIPEFGKIVSMMQFNMYHHYTVDEHLLRAVDVLSRIERGLEEEAHPLTAMLMPAIEDREALYVAVLLHDIAKGRPEDHSVAGAKVARKLCPRFRLSPKQTETVVWLVEEHLTMSMVAQTRDLNDRKTIVDFAERVQSLERLKMLLILTVCDIRAVGPGVWNGWKGQLLRTLYYETELLLSGGFSELSRKERAKHAADMLEEALADWPKEERQTYVRLHYQPYLLTVALDEQVRHAAFIREADAAGRTLATMVRTHDFHAITEITVLSPDHPRLLTVIAGACAAAGANIVGAQIHTTSDGRALDTILVNREFSVAEDETRRAASIGKLIEDVLSGRKKLPDVIASRTRSKKRSRAFTVTPEVTISNALSNKFTVIEVEGLDRTGLLSEVTAVLSDLSLDIASAHITTFGEKVIDTFYVTDLVGSKITSENRQMNIAARLKAVLAGEVDEARERMPSGIIAPTPVPRASHGSKATKAET</sequence>
<organism>
    <name type="scientific">Sinorhizobium medicae (strain WSM419)</name>
    <name type="common">Ensifer medicae</name>
    <dbReference type="NCBI Taxonomy" id="366394"/>
    <lineage>
        <taxon>Bacteria</taxon>
        <taxon>Pseudomonadati</taxon>
        <taxon>Pseudomonadota</taxon>
        <taxon>Alphaproteobacteria</taxon>
        <taxon>Hyphomicrobiales</taxon>
        <taxon>Rhizobiaceae</taxon>
        <taxon>Sinorhizobium/Ensifer group</taxon>
        <taxon>Sinorhizobium</taxon>
    </lineage>
</organism>
<protein>
    <recommendedName>
        <fullName evidence="1">Bifunctional uridylyltransferase/uridylyl-removing enzyme</fullName>
        <shortName evidence="1">UTase/UR</shortName>
    </recommendedName>
    <alternativeName>
        <fullName evidence="1">Bifunctional [protein-PII] modification enzyme</fullName>
    </alternativeName>
    <alternativeName>
        <fullName evidence="1">Bifunctional nitrogen sensor protein</fullName>
    </alternativeName>
    <domain>
        <recommendedName>
            <fullName evidence="1">[Protein-PII] uridylyltransferase</fullName>
            <shortName evidence="1">PII uridylyltransferase</shortName>
            <shortName evidence="1">UTase</shortName>
            <ecNumber evidence="1">2.7.7.59</ecNumber>
        </recommendedName>
    </domain>
    <domain>
        <recommendedName>
            <fullName evidence="1">[Protein-PII]-UMP uridylyl-removing enzyme</fullName>
            <shortName evidence="1">UR</shortName>
            <ecNumber evidence="1">3.1.4.-</ecNumber>
        </recommendedName>
    </domain>
</protein>
<keyword id="KW-0378">Hydrolase</keyword>
<keyword id="KW-0460">Magnesium</keyword>
<keyword id="KW-0511">Multifunctional enzyme</keyword>
<keyword id="KW-0535">Nitrogen fixation</keyword>
<keyword id="KW-0548">Nucleotidyltransferase</keyword>
<keyword id="KW-0677">Repeat</keyword>
<keyword id="KW-0808">Transferase</keyword>